<gene>
    <name evidence="9" type="primary">osr2</name>
    <name type="ORF">zgc:111995</name>
</gene>
<evidence type="ECO:0000250" key="1">
    <source>
        <dbReference type="UniProtKB" id="Q32NK7"/>
    </source>
</evidence>
<evidence type="ECO:0000255" key="2"/>
<evidence type="ECO:0000255" key="3">
    <source>
        <dbReference type="PROSITE-ProRule" id="PRU00042"/>
    </source>
</evidence>
<evidence type="ECO:0000256" key="4">
    <source>
        <dbReference type="SAM" id="MobiDB-lite"/>
    </source>
</evidence>
<evidence type="ECO:0000269" key="5">
    <source>
    </source>
</evidence>
<evidence type="ECO:0000303" key="6">
    <source>
    </source>
</evidence>
<evidence type="ECO:0000305" key="7"/>
<evidence type="ECO:0000312" key="8">
    <source>
        <dbReference type="EMBL" id="AAH93148.1"/>
    </source>
</evidence>
<evidence type="ECO:0000312" key="9">
    <source>
        <dbReference type="ZFIN" id="ZDB-GENE-050417-183"/>
    </source>
</evidence>
<keyword id="KW-0217">Developmental protein</keyword>
<keyword id="KW-0479">Metal-binding</keyword>
<keyword id="KW-0539">Nucleus</keyword>
<keyword id="KW-1185">Reference proteome</keyword>
<keyword id="KW-0677">Repeat</keyword>
<keyword id="KW-0678">Repressor</keyword>
<keyword id="KW-0804">Transcription</keyword>
<keyword id="KW-0805">Transcription regulation</keyword>
<keyword id="KW-0862">Zinc</keyword>
<keyword id="KW-0863">Zinc-finger</keyword>
<accession>Q567J8</accession>
<organism>
    <name type="scientific">Danio rerio</name>
    <name type="common">Zebrafish</name>
    <name type="synonym">Brachydanio rerio</name>
    <dbReference type="NCBI Taxonomy" id="7955"/>
    <lineage>
        <taxon>Eukaryota</taxon>
        <taxon>Metazoa</taxon>
        <taxon>Chordata</taxon>
        <taxon>Craniata</taxon>
        <taxon>Vertebrata</taxon>
        <taxon>Euteleostomi</taxon>
        <taxon>Actinopterygii</taxon>
        <taxon>Neopterygii</taxon>
        <taxon>Teleostei</taxon>
        <taxon>Ostariophysi</taxon>
        <taxon>Cypriniformes</taxon>
        <taxon>Danionidae</taxon>
        <taxon>Danioninae</taxon>
        <taxon>Danio</taxon>
    </lineage>
</organism>
<sequence>MGSKTLPAPVPLHPAPQLNYSLLRTLNAFPVAVDQLYGLSALHTVQMNRWTVGFPQLQGLADPRFPGALPFPAAAAHLLPHKHPVHRKDRPRFDFANLAVAATQEDPPVTGQSRLSPERRPARGRLPAKSKKEFICRFCGRHFTKSYNLLIHERTHTDERPYTCDICHKAFRRQDHLRDHRYIHSKEKPFKCQECGKGFCQSRTLAVHKTLHLQTSSLSAAAAAGRCFGATATCGATV</sequence>
<dbReference type="EMBL" id="BC093148">
    <property type="protein sequence ID" value="AAH93148.1"/>
    <property type="molecule type" value="mRNA"/>
</dbReference>
<dbReference type="RefSeq" id="NP_001017694.1">
    <property type="nucleotide sequence ID" value="NM_001017694.1"/>
</dbReference>
<dbReference type="SMR" id="Q567J8"/>
<dbReference type="STRING" id="7955.ENSDARP00000055394"/>
<dbReference type="PaxDb" id="7955-ENSDARP00000055394"/>
<dbReference type="GeneID" id="550389"/>
<dbReference type="KEGG" id="dre:550389"/>
<dbReference type="AGR" id="ZFIN:ZDB-GENE-050417-183"/>
<dbReference type="CTD" id="116039"/>
<dbReference type="ZFIN" id="ZDB-GENE-050417-183">
    <property type="gene designation" value="osr2"/>
</dbReference>
<dbReference type="eggNOG" id="KOG1721">
    <property type="taxonomic scope" value="Eukaryota"/>
</dbReference>
<dbReference type="InParanoid" id="Q567J8"/>
<dbReference type="OrthoDB" id="9451254at2759"/>
<dbReference type="PhylomeDB" id="Q567J8"/>
<dbReference type="PRO" id="PR:Q567J8"/>
<dbReference type="Proteomes" id="UP000000437">
    <property type="component" value="Chromosome 16"/>
</dbReference>
<dbReference type="GO" id="GO:0005634">
    <property type="term" value="C:nucleus"/>
    <property type="evidence" value="ECO:0000318"/>
    <property type="project" value="GO_Central"/>
</dbReference>
<dbReference type="GO" id="GO:0000981">
    <property type="term" value="F:DNA-binding transcription factor activity, RNA polymerase II-specific"/>
    <property type="evidence" value="ECO:0000318"/>
    <property type="project" value="GO_Central"/>
</dbReference>
<dbReference type="GO" id="GO:0000977">
    <property type="term" value="F:RNA polymerase II transcription regulatory region sequence-specific DNA binding"/>
    <property type="evidence" value="ECO:0000318"/>
    <property type="project" value="GO_Central"/>
</dbReference>
<dbReference type="GO" id="GO:0008270">
    <property type="term" value="F:zinc ion binding"/>
    <property type="evidence" value="ECO:0007669"/>
    <property type="project" value="UniProtKB-KW"/>
</dbReference>
<dbReference type="GO" id="GO:0001822">
    <property type="term" value="P:kidney development"/>
    <property type="evidence" value="ECO:0000314"/>
    <property type="project" value="ZFIN"/>
</dbReference>
<dbReference type="GO" id="GO:0045892">
    <property type="term" value="P:negative regulation of DNA-templated transcription"/>
    <property type="evidence" value="ECO:0000315"/>
    <property type="project" value="UniProtKB"/>
</dbReference>
<dbReference type="GO" id="GO:0000122">
    <property type="term" value="P:negative regulation of transcription by RNA polymerase II"/>
    <property type="evidence" value="ECO:0000315"/>
    <property type="project" value="UniProtKB"/>
</dbReference>
<dbReference type="GO" id="GO:0007389">
    <property type="term" value="P:pattern specification process"/>
    <property type="evidence" value="ECO:0000318"/>
    <property type="project" value="GO_Central"/>
</dbReference>
<dbReference type="GO" id="GO:0033339">
    <property type="term" value="P:pectoral fin development"/>
    <property type="evidence" value="ECO:0000315"/>
    <property type="project" value="ZFIN"/>
</dbReference>
<dbReference type="GO" id="GO:0048793">
    <property type="term" value="P:pronephros development"/>
    <property type="evidence" value="ECO:0000314"/>
    <property type="project" value="ZFIN"/>
</dbReference>
<dbReference type="GO" id="GO:0001655">
    <property type="term" value="P:urogenital system development"/>
    <property type="evidence" value="ECO:0000318"/>
    <property type="project" value="GO_Central"/>
</dbReference>
<dbReference type="FunFam" id="3.30.160.60:FF:000254">
    <property type="entry name" value="Odd-skipped related transciption factor 1"/>
    <property type="match status" value="1"/>
</dbReference>
<dbReference type="FunFam" id="3.30.160.60:FF:000090">
    <property type="entry name" value="Odd-skipped-related transciption factor 2"/>
    <property type="match status" value="1"/>
</dbReference>
<dbReference type="FunFam" id="3.30.160.60:FF:000311">
    <property type="entry name" value="protein odd-skipped-related 2 isoform X1"/>
    <property type="match status" value="1"/>
</dbReference>
<dbReference type="Gene3D" id="3.30.160.60">
    <property type="entry name" value="Classic Zinc Finger"/>
    <property type="match status" value="3"/>
</dbReference>
<dbReference type="InterPro" id="IPR050717">
    <property type="entry name" value="C2H2-ZF_Transcription_Reg"/>
</dbReference>
<dbReference type="InterPro" id="IPR036236">
    <property type="entry name" value="Znf_C2H2_sf"/>
</dbReference>
<dbReference type="InterPro" id="IPR013087">
    <property type="entry name" value="Znf_C2H2_type"/>
</dbReference>
<dbReference type="PANTHER" id="PTHR14196">
    <property type="entry name" value="ODD-SKIPPED - RELATED"/>
    <property type="match status" value="1"/>
</dbReference>
<dbReference type="PANTHER" id="PTHR14196:SF4">
    <property type="entry name" value="PROTEIN ODD-SKIPPED-RELATED 2"/>
    <property type="match status" value="1"/>
</dbReference>
<dbReference type="Pfam" id="PF00096">
    <property type="entry name" value="zf-C2H2"/>
    <property type="match status" value="3"/>
</dbReference>
<dbReference type="SMART" id="SM00355">
    <property type="entry name" value="ZnF_C2H2"/>
    <property type="match status" value="3"/>
</dbReference>
<dbReference type="SUPFAM" id="SSF57667">
    <property type="entry name" value="beta-beta-alpha zinc fingers"/>
    <property type="match status" value="2"/>
</dbReference>
<dbReference type="PROSITE" id="PS00028">
    <property type="entry name" value="ZINC_FINGER_C2H2_1"/>
    <property type="match status" value="3"/>
</dbReference>
<dbReference type="PROSITE" id="PS50157">
    <property type="entry name" value="ZINC_FINGER_C2H2_2"/>
    <property type="match status" value="3"/>
</dbReference>
<feature type="chain" id="PRO_0000390732" description="Protein odd-skipped-related 2">
    <location>
        <begin position="1"/>
        <end position="238"/>
    </location>
</feature>
<feature type="zinc finger region" description="C2H2-type 1" evidence="3">
    <location>
        <begin position="134"/>
        <end position="156"/>
    </location>
</feature>
<feature type="zinc finger region" description="C2H2-type 2" evidence="3">
    <location>
        <begin position="162"/>
        <end position="184"/>
    </location>
</feature>
<feature type="zinc finger region" description="C2H2-type 3" evidence="3">
    <location>
        <begin position="190"/>
        <end position="212"/>
    </location>
</feature>
<feature type="region of interest" description="Disordered" evidence="4">
    <location>
        <begin position="105"/>
        <end position="126"/>
    </location>
</feature>
<protein>
    <recommendedName>
        <fullName evidence="8">Protein odd-skipped-related 2</fullName>
        <shortName evidence="6">zOsr2</shortName>
    </recommendedName>
</protein>
<name>OSR2_DANRE</name>
<reference evidence="8" key="1">
    <citation type="submission" date="2005-04" db="EMBL/GenBank/DDBJ databases">
        <authorList>
            <consortium name="NIH - Zebrafish Gene Collection (ZGC) project"/>
        </authorList>
    </citation>
    <scope>NUCLEOTIDE SEQUENCE [LARGE SCALE MRNA]</scope>
    <source>
        <tissue evidence="8">Olfactory epithelium</tissue>
    </source>
</reference>
<reference evidence="7" key="2">
    <citation type="journal article" date="2007" name="Dev. Biol.">
        <title>Odd-skipped genes encode repressors that control kidney development.</title>
        <authorList>
            <person name="Tena J.J."/>
            <person name="Neto A."/>
            <person name="de la Calle-Mustienes E."/>
            <person name="Bras-Pereira C."/>
            <person name="Casares F."/>
            <person name="Gomez-Skarmeta J.L."/>
        </authorList>
    </citation>
    <scope>FUNCTION</scope>
    <scope>TISSUE SPECIFICITY</scope>
    <scope>DISRUPTION PHENOTYPE</scope>
</reference>
<comment type="function">
    <text evidence="1 5">Transcriptional repressor (By similarity). Required for pronephric kidney development.</text>
</comment>
<comment type="subcellular location">
    <subcellularLocation>
        <location evidence="1">Nucleus</location>
    </subcellularLocation>
</comment>
<comment type="tissue specificity">
    <text evidence="5">At the 8-somite stage, expressed in the pronephros, with weak generalized expression elsewhere. At 24 hpf, expressed in the kidney tubules and the anterior duct, and also in the gut. At 60 hpf, expressed in the tubules and the pectoral fin buds.</text>
</comment>
<comment type="disruption phenotype">
    <text evidence="5">Embryos show a down-regulation of early pronephric markers lhx1a/lim1 and pax2a/pax2.1, and subsequent defects in renal structures. In addition, embryos at 72 hpf display pericardial edemas and kidney cysts characteristic of kidney failure.</text>
</comment>
<comment type="similarity">
    <text evidence="2">Belongs to the Odd C2H2-type zinc-finger protein family.</text>
</comment>
<proteinExistence type="evidence at transcript level"/>